<organism>
    <name type="scientific">Cupriavidus pinatubonensis (strain JMP 134 / LMG 1197)</name>
    <name type="common">Cupriavidus necator (strain JMP 134)</name>
    <dbReference type="NCBI Taxonomy" id="264198"/>
    <lineage>
        <taxon>Bacteria</taxon>
        <taxon>Pseudomonadati</taxon>
        <taxon>Pseudomonadota</taxon>
        <taxon>Betaproteobacteria</taxon>
        <taxon>Burkholderiales</taxon>
        <taxon>Burkholderiaceae</taxon>
        <taxon>Cupriavidus</taxon>
    </lineage>
</organism>
<gene>
    <name evidence="1" type="primary">dxs</name>
    <name type="ordered locus">Reut_A0882</name>
</gene>
<accession>Q474C2</accession>
<keyword id="KW-0414">Isoprene biosynthesis</keyword>
<keyword id="KW-0460">Magnesium</keyword>
<keyword id="KW-0479">Metal-binding</keyword>
<keyword id="KW-0784">Thiamine biosynthesis</keyword>
<keyword id="KW-0786">Thiamine pyrophosphate</keyword>
<keyword id="KW-0808">Transferase</keyword>
<dbReference type="EC" id="2.2.1.7" evidence="1"/>
<dbReference type="EMBL" id="CP000090">
    <property type="protein sequence ID" value="AAZ60261.1"/>
    <property type="molecule type" value="Genomic_DNA"/>
</dbReference>
<dbReference type="SMR" id="Q474C2"/>
<dbReference type="STRING" id="264198.Reut_A0882"/>
<dbReference type="KEGG" id="reu:Reut_A0882"/>
<dbReference type="eggNOG" id="COG1154">
    <property type="taxonomic scope" value="Bacteria"/>
</dbReference>
<dbReference type="HOGENOM" id="CLU_009227_1_4_4"/>
<dbReference type="OrthoDB" id="9803371at2"/>
<dbReference type="UniPathway" id="UPA00064">
    <property type="reaction ID" value="UER00091"/>
</dbReference>
<dbReference type="GO" id="GO:0005829">
    <property type="term" value="C:cytosol"/>
    <property type="evidence" value="ECO:0007669"/>
    <property type="project" value="TreeGrafter"/>
</dbReference>
<dbReference type="GO" id="GO:0008661">
    <property type="term" value="F:1-deoxy-D-xylulose-5-phosphate synthase activity"/>
    <property type="evidence" value="ECO:0007669"/>
    <property type="project" value="UniProtKB-UniRule"/>
</dbReference>
<dbReference type="GO" id="GO:0000287">
    <property type="term" value="F:magnesium ion binding"/>
    <property type="evidence" value="ECO:0007669"/>
    <property type="project" value="UniProtKB-UniRule"/>
</dbReference>
<dbReference type="GO" id="GO:0030976">
    <property type="term" value="F:thiamine pyrophosphate binding"/>
    <property type="evidence" value="ECO:0007669"/>
    <property type="project" value="UniProtKB-UniRule"/>
</dbReference>
<dbReference type="GO" id="GO:0052865">
    <property type="term" value="P:1-deoxy-D-xylulose 5-phosphate biosynthetic process"/>
    <property type="evidence" value="ECO:0007669"/>
    <property type="project" value="UniProtKB-UniPathway"/>
</dbReference>
<dbReference type="GO" id="GO:0019288">
    <property type="term" value="P:isopentenyl diphosphate biosynthetic process, methylerythritol 4-phosphate pathway"/>
    <property type="evidence" value="ECO:0007669"/>
    <property type="project" value="TreeGrafter"/>
</dbReference>
<dbReference type="GO" id="GO:0016114">
    <property type="term" value="P:terpenoid biosynthetic process"/>
    <property type="evidence" value="ECO:0007669"/>
    <property type="project" value="UniProtKB-UniRule"/>
</dbReference>
<dbReference type="GO" id="GO:0009228">
    <property type="term" value="P:thiamine biosynthetic process"/>
    <property type="evidence" value="ECO:0007669"/>
    <property type="project" value="UniProtKB-UniRule"/>
</dbReference>
<dbReference type="CDD" id="cd02007">
    <property type="entry name" value="TPP_DXS"/>
    <property type="match status" value="1"/>
</dbReference>
<dbReference type="CDD" id="cd07033">
    <property type="entry name" value="TPP_PYR_DXS_TK_like"/>
    <property type="match status" value="1"/>
</dbReference>
<dbReference type="FunFam" id="3.40.50.920:FF:000002">
    <property type="entry name" value="1-deoxy-D-xylulose-5-phosphate synthase"/>
    <property type="match status" value="1"/>
</dbReference>
<dbReference type="FunFam" id="3.40.50.970:FF:000005">
    <property type="entry name" value="1-deoxy-D-xylulose-5-phosphate synthase"/>
    <property type="match status" value="1"/>
</dbReference>
<dbReference type="Gene3D" id="3.40.50.920">
    <property type="match status" value="1"/>
</dbReference>
<dbReference type="Gene3D" id="3.40.50.970">
    <property type="match status" value="2"/>
</dbReference>
<dbReference type="HAMAP" id="MF_00315">
    <property type="entry name" value="DXP_synth"/>
    <property type="match status" value="1"/>
</dbReference>
<dbReference type="InterPro" id="IPR005477">
    <property type="entry name" value="Dxylulose-5-P_synthase"/>
</dbReference>
<dbReference type="InterPro" id="IPR029061">
    <property type="entry name" value="THDP-binding"/>
</dbReference>
<dbReference type="InterPro" id="IPR009014">
    <property type="entry name" value="Transketo_C/PFOR_II"/>
</dbReference>
<dbReference type="InterPro" id="IPR005475">
    <property type="entry name" value="Transketolase-like_Pyr-bd"/>
</dbReference>
<dbReference type="InterPro" id="IPR020826">
    <property type="entry name" value="Transketolase_BS"/>
</dbReference>
<dbReference type="InterPro" id="IPR033248">
    <property type="entry name" value="Transketolase_C"/>
</dbReference>
<dbReference type="InterPro" id="IPR049557">
    <property type="entry name" value="Transketolase_CS"/>
</dbReference>
<dbReference type="NCBIfam" id="TIGR00204">
    <property type="entry name" value="dxs"/>
    <property type="match status" value="1"/>
</dbReference>
<dbReference type="NCBIfam" id="NF003933">
    <property type="entry name" value="PRK05444.2-2"/>
    <property type="match status" value="1"/>
</dbReference>
<dbReference type="PANTHER" id="PTHR43322">
    <property type="entry name" value="1-D-DEOXYXYLULOSE 5-PHOSPHATE SYNTHASE-RELATED"/>
    <property type="match status" value="1"/>
</dbReference>
<dbReference type="PANTHER" id="PTHR43322:SF5">
    <property type="entry name" value="1-DEOXY-D-XYLULOSE-5-PHOSPHATE SYNTHASE, CHLOROPLASTIC"/>
    <property type="match status" value="1"/>
</dbReference>
<dbReference type="Pfam" id="PF13292">
    <property type="entry name" value="DXP_synthase_N"/>
    <property type="match status" value="1"/>
</dbReference>
<dbReference type="Pfam" id="PF02779">
    <property type="entry name" value="Transket_pyr"/>
    <property type="match status" value="1"/>
</dbReference>
<dbReference type="Pfam" id="PF02780">
    <property type="entry name" value="Transketolase_C"/>
    <property type="match status" value="1"/>
</dbReference>
<dbReference type="SMART" id="SM00861">
    <property type="entry name" value="Transket_pyr"/>
    <property type="match status" value="1"/>
</dbReference>
<dbReference type="SUPFAM" id="SSF52518">
    <property type="entry name" value="Thiamin diphosphate-binding fold (THDP-binding)"/>
    <property type="match status" value="2"/>
</dbReference>
<dbReference type="SUPFAM" id="SSF52922">
    <property type="entry name" value="TK C-terminal domain-like"/>
    <property type="match status" value="1"/>
</dbReference>
<dbReference type="PROSITE" id="PS00801">
    <property type="entry name" value="TRANSKETOLASE_1"/>
    <property type="match status" value="1"/>
</dbReference>
<dbReference type="PROSITE" id="PS00802">
    <property type="entry name" value="TRANSKETOLASE_2"/>
    <property type="match status" value="1"/>
</dbReference>
<protein>
    <recommendedName>
        <fullName evidence="1">1-deoxy-D-xylulose-5-phosphate synthase</fullName>
        <ecNumber evidence="1">2.2.1.7</ecNumber>
    </recommendedName>
    <alternativeName>
        <fullName evidence="1">1-deoxyxylulose-5-phosphate synthase</fullName>
        <shortName evidence="1">DXP synthase</shortName>
        <shortName evidence="1">DXPS</shortName>
    </alternativeName>
</protein>
<proteinExistence type="inferred from homology"/>
<reference key="1">
    <citation type="journal article" date="2010" name="PLoS ONE">
        <title>The complete multipartite genome sequence of Cupriavidus necator JMP134, a versatile pollutant degrader.</title>
        <authorList>
            <person name="Lykidis A."/>
            <person name="Perez-Pantoja D."/>
            <person name="Ledger T."/>
            <person name="Mavromatis K."/>
            <person name="Anderson I.J."/>
            <person name="Ivanova N.N."/>
            <person name="Hooper S.D."/>
            <person name="Lapidus A."/>
            <person name="Lucas S."/>
            <person name="Gonzalez B."/>
            <person name="Kyrpides N.C."/>
        </authorList>
    </citation>
    <scope>NUCLEOTIDE SEQUENCE [LARGE SCALE GENOMIC DNA]</scope>
    <source>
        <strain>JMP134 / LMG 1197</strain>
    </source>
</reference>
<feature type="chain" id="PRO_0000256465" description="1-deoxy-D-xylulose-5-phosphate synthase">
    <location>
        <begin position="1"/>
        <end position="638"/>
    </location>
</feature>
<feature type="binding site" evidence="1">
    <location>
        <position position="75"/>
    </location>
    <ligand>
        <name>thiamine diphosphate</name>
        <dbReference type="ChEBI" id="CHEBI:58937"/>
    </ligand>
</feature>
<feature type="binding site" evidence="1">
    <location>
        <begin position="116"/>
        <end position="118"/>
    </location>
    <ligand>
        <name>thiamine diphosphate</name>
        <dbReference type="ChEBI" id="CHEBI:58937"/>
    </ligand>
</feature>
<feature type="binding site" evidence="1">
    <location>
        <position position="147"/>
    </location>
    <ligand>
        <name>Mg(2+)</name>
        <dbReference type="ChEBI" id="CHEBI:18420"/>
    </ligand>
</feature>
<feature type="binding site" evidence="1">
    <location>
        <begin position="148"/>
        <end position="149"/>
    </location>
    <ligand>
        <name>thiamine diphosphate</name>
        <dbReference type="ChEBI" id="CHEBI:58937"/>
    </ligand>
</feature>
<feature type="binding site" evidence="1">
    <location>
        <position position="177"/>
    </location>
    <ligand>
        <name>Mg(2+)</name>
        <dbReference type="ChEBI" id="CHEBI:18420"/>
    </ligand>
</feature>
<feature type="binding site" evidence="1">
    <location>
        <position position="177"/>
    </location>
    <ligand>
        <name>thiamine diphosphate</name>
        <dbReference type="ChEBI" id="CHEBI:58937"/>
    </ligand>
</feature>
<feature type="binding site" evidence="1">
    <location>
        <position position="288"/>
    </location>
    <ligand>
        <name>thiamine diphosphate</name>
        <dbReference type="ChEBI" id="CHEBI:58937"/>
    </ligand>
</feature>
<feature type="binding site" evidence="1">
    <location>
        <position position="370"/>
    </location>
    <ligand>
        <name>thiamine diphosphate</name>
        <dbReference type="ChEBI" id="CHEBI:58937"/>
    </ligand>
</feature>
<evidence type="ECO:0000255" key="1">
    <source>
        <dbReference type="HAMAP-Rule" id="MF_00315"/>
    </source>
</evidence>
<comment type="function">
    <text evidence="1">Catalyzes the acyloin condensation reaction between C atoms 2 and 3 of pyruvate and glyceraldehyde 3-phosphate to yield 1-deoxy-D-xylulose-5-phosphate (DXP).</text>
</comment>
<comment type="catalytic activity">
    <reaction evidence="1">
        <text>D-glyceraldehyde 3-phosphate + pyruvate + H(+) = 1-deoxy-D-xylulose 5-phosphate + CO2</text>
        <dbReference type="Rhea" id="RHEA:12605"/>
        <dbReference type="ChEBI" id="CHEBI:15361"/>
        <dbReference type="ChEBI" id="CHEBI:15378"/>
        <dbReference type="ChEBI" id="CHEBI:16526"/>
        <dbReference type="ChEBI" id="CHEBI:57792"/>
        <dbReference type="ChEBI" id="CHEBI:59776"/>
        <dbReference type="EC" id="2.2.1.7"/>
    </reaction>
</comment>
<comment type="cofactor">
    <cofactor evidence="1">
        <name>Mg(2+)</name>
        <dbReference type="ChEBI" id="CHEBI:18420"/>
    </cofactor>
    <text evidence="1">Binds 1 Mg(2+) ion per subunit.</text>
</comment>
<comment type="cofactor">
    <cofactor evidence="1">
        <name>thiamine diphosphate</name>
        <dbReference type="ChEBI" id="CHEBI:58937"/>
    </cofactor>
    <text evidence="1">Binds 1 thiamine pyrophosphate per subunit.</text>
</comment>
<comment type="pathway">
    <text evidence="1">Metabolic intermediate biosynthesis; 1-deoxy-D-xylulose 5-phosphate biosynthesis; 1-deoxy-D-xylulose 5-phosphate from D-glyceraldehyde 3-phosphate and pyruvate: step 1/1.</text>
</comment>
<comment type="subunit">
    <text evidence="1">Homodimer.</text>
</comment>
<comment type="similarity">
    <text evidence="1">Belongs to the transketolase family. DXPS subfamily.</text>
</comment>
<name>DXS_CUPPJ</name>
<sequence length="638" mass="68747">MTYALLKKIDAPADLRKLDRRELRTLADELRAYVLESVSQTGGHLSSNLGTVELTIALHYVFHTPDDRVVWDVGHQSYPHKILTGRRERMNTLRQFGGISGFPRRSESQYDTFGTAHSSTSISAALGMALGARTLGEQRVSIAVIGDGAMTAGMAFEALNNAGVYKDLPLVVVLNDNDMSISPPVGALNKHLARLLSGQFYAATKKGIEKVLSVAPPVLEFAKRFEEHAKGMMVPATLFEEFGFNYIGPIDGHDLDSLVPTLQNIRKRALEGAGPQFLHVVTKKGQGYKLAEADPILYHGPGKFNPAEGIRPAAKPARKTYTQVFGEWLCDMAAADKRLIGITPAMREGSGMVEFEKRFPERYYDVGIAEQHAVTFAGGMACEGLKPIVAIYSTFLQRGYDQLIHDVALQNLPVVFALDRAGLVGADGATHAGAYDIAYLRCIPNMMVMTPSDENECRQLLTTAFHQNCPTAVRYPRGAGQGVATEAVLKDVPVGKGVMRRTGGARSGQRVAFLGFGSMVHPALGAAQALDASVADMRFVKPLDVELVKRLAEEHNYLVTVEEGSVMGGAGSAVLEALAEAGIDIPVLVLGLPDRFIDHGDPALLLSQCGLDAAGIERSVRERFGIGQAPVAVASRVA</sequence>